<evidence type="ECO:0000255" key="1">
    <source>
        <dbReference type="HAMAP-Rule" id="MF_00583"/>
    </source>
</evidence>
<dbReference type="EC" id="2.7.6.1" evidence="1"/>
<dbReference type="EMBL" id="CP000077">
    <property type="protein sequence ID" value="AAY80624.1"/>
    <property type="molecule type" value="Genomic_DNA"/>
</dbReference>
<dbReference type="RefSeq" id="WP_011278126.1">
    <property type="nucleotide sequence ID" value="NC_007181.1"/>
</dbReference>
<dbReference type="SMR" id="Q4J9A6"/>
<dbReference type="STRING" id="330779.Saci_1282"/>
<dbReference type="GeneID" id="14551787"/>
<dbReference type="KEGG" id="sai:Saci_1282"/>
<dbReference type="PATRIC" id="fig|330779.12.peg.1240"/>
<dbReference type="eggNOG" id="arCOG00067">
    <property type="taxonomic scope" value="Archaea"/>
</dbReference>
<dbReference type="HOGENOM" id="CLU_033546_2_2_2"/>
<dbReference type="UniPathway" id="UPA00087">
    <property type="reaction ID" value="UER00172"/>
</dbReference>
<dbReference type="Proteomes" id="UP000001018">
    <property type="component" value="Chromosome"/>
</dbReference>
<dbReference type="GO" id="GO:0005737">
    <property type="term" value="C:cytoplasm"/>
    <property type="evidence" value="ECO:0007669"/>
    <property type="project" value="UniProtKB-SubCell"/>
</dbReference>
<dbReference type="GO" id="GO:0002189">
    <property type="term" value="C:ribose phosphate diphosphokinase complex"/>
    <property type="evidence" value="ECO:0007669"/>
    <property type="project" value="TreeGrafter"/>
</dbReference>
<dbReference type="GO" id="GO:0005524">
    <property type="term" value="F:ATP binding"/>
    <property type="evidence" value="ECO:0007669"/>
    <property type="project" value="UniProtKB-KW"/>
</dbReference>
<dbReference type="GO" id="GO:0016301">
    <property type="term" value="F:kinase activity"/>
    <property type="evidence" value="ECO:0007669"/>
    <property type="project" value="UniProtKB-KW"/>
</dbReference>
<dbReference type="GO" id="GO:0000287">
    <property type="term" value="F:magnesium ion binding"/>
    <property type="evidence" value="ECO:0007669"/>
    <property type="project" value="UniProtKB-UniRule"/>
</dbReference>
<dbReference type="GO" id="GO:0004749">
    <property type="term" value="F:ribose phosphate diphosphokinase activity"/>
    <property type="evidence" value="ECO:0007669"/>
    <property type="project" value="UniProtKB-UniRule"/>
</dbReference>
<dbReference type="GO" id="GO:0006015">
    <property type="term" value="P:5-phosphoribose 1-diphosphate biosynthetic process"/>
    <property type="evidence" value="ECO:0007669"/>
    <property type="project" value="UniProtKB-UniRule"/>
</dbReference>
<dbReference type="GO" id="GO:0006164">
    <property type="term" value="P:purine nucleotide biosynthetic process"/>
    <property type="evidence" value="ECO:0007669"/>
    <property type="project" value="TreeGrafter"/>
</dbReference>
<dbReference type="CDD" id="cd06223">
    <property type="entry name" value="PRTases_typeI"/>
    <property type="match status" value="1"/>
</dbReference>
<dbReference type="FunFam" id="3.40.50.2020:FF:000074">
    <property type="entry name" value="Ribose-phosphate pyrophosphokinase"/>
    <property type="match status" value="1"/>
</dbReference>
<dbReference type="Gene3D" id="3.40.50.2020">
    <property type="match status" value="2"/>
</dbReference>
<dbReference type="HAMAP" id="MF_00583_A">
    <property type="entry name" value="RibP_PPkinase_A"/>
    <property type="match status" value="1"/>
</dbReference>
<dbReference type="InterPro" id="IPR029099">
    <property type="entry name" value="Pribosyltran_N"/>
</dbReference>
<dbReference type="InterPro" id="IPR000836">
    <property type="entry name" value="PRibTrfase_dom"/>
</dbReference>
<dbReference type="InterPro" id="IPR029057">
    <property type="entry name" value="PRTase-like"/>
</dbReference>
<dbReference type="InterPro" id="IPR005946">
    <property type="entry name" value="Rib-P_diPkinase"/>
</dbReference>
<dbReference type="InterPro" id="IPR037514">
    <property type="entry name" value="Rib-P_diPkinase_arc"/>
</dbReference>
<dbReference type="NCBIfam" id="NF002095">
    <property type="entry name" value="PRK00934.1"/>
    <property type="match status" value="1"/>
</dbReference>
<dbReference type="NCBIfam" id="TIGR01251">
    <property type="entry name" value="ribP_PPkin"/>
    <property type="match status" value="1"/>
</dbReference>
<dbReference type="PANTHER" id="PTHR10210">
    <property type="entry name" value="RIBOSE-PHOSPHATE DIPHOSPHOKINASE FAMILY MEMBER"/>
    <property type="match status" value="1"/>
</dbReference>
<dbReference type="PANTHER" id="PTHR10210:SF32">
    <property type="entry name" value="RIBOSE-PHOSPHATE PYROPHOSPHOKINASE 2"/>
    <property type="match status" value="1"/>
</dbReference>
<dbReference type="Pfam" id="PF00156">
    <property type="entry name" value="Pribosyltran"/>
    <property type="match status" value="1"/>
</dbReference>
<dbReference type="Pfam" id="PF13793">
    <property type="entry name" value="Pribosyltran_N"/>
    <property type="match status" value="1"/>
</dbReference>
<dbReference type="SMART" id="SM01400">
    <property type="entry name" value="Pribosyltran_N"/>
    <property type="match status" value="1"/>
</dbReference>
<dbReference type="SUPFAM" id="SSF53271">
    <property type="entry name" value="PRTase-like"/>
    <property type="match status" value="1"/>
</dbReference>
<reference key="1">
    <citation type="journal article" date="2005" name="J. Bacteriol.">
        <title>The genome of Sulfolobus acidocaldarius, a model organism of the Crenarchaeota.</title>
        <authorList>
            <person name="Chen L."/>
            <person name="Bruegger K."/>
            <person name="Skovgaard M."/>
            <person name="Redder P."/>
            <person name="She Q."/>
            <person name="Torarinsson E."/>
            <person name="Greve B."/>
            <person name="Awayez M."/>
            <person name="Zibat A."/>
            <person name="Klenk H.-P."/>
            <person name="Garrett R.A."/>
        </authorList>
    </citation>
    <scope>NUCLEOTIDE SEQUENCE [LARGE SCALE GENOMIC DNA]</scope>
    <source>
        <strain>ATCC 33909 / DSM 639 / JCM 8929 / NBRC 15157 / NCIMB 11770</strain>
    </source>
</reference>
<organism>
    <name type="scientific">Sulfolobus acidocaldarius (strain ATCC 33909 / DSM 639 / JCM 8929 / NBRC 15157 / NCIMB 11770)</name>
    <dbReference type="NCBI Taxonomy" id="330779"/>
    <lineage>
        <taxon>Archaea</taxon>
        <taxon>Thermoproteota</taxon>
        <taxon>Thermoprotei</taxon>
        <taxon>Sulfolobales</taxon>
        <taxon>Sulfolobaceae</taxon>
        <taxon>Sulfolobus</taxon>
    </lineage>
</organism>
<comment type="function">
    <text evidence="1">Involved in the biosynthesis of the central metabolite phospho-alpha-D-ribosyl-1-pyrophosphate (PRPP) via the transfer of pyrophosphoryl group from ATP to 1-hydroxyl of ribose-5-phosphate (Rib-5-P).</text>
</comment>
<comment type="catalytic activity">
    <reaction evidence="1">
        <text>D-ribose 5-phosphate + ATP = 5-phospho-alpha-D-ribose 1-diphosphate + AMP + H(+)</text>
        <dbReference type="Rhea" id="RHEA:15609"/>
        <dbReference type="ChEBI" id="CHEBI:15378"/>
        <dbReference type="ChEBI" id="CHEBI:30616"/>
        <dbReference type="ChEBI" id="CHEBI:58017"/>
        <dbReference type="ChEBI" id="CHEBI:78346"/>
        <dbReference type="ChEBI" id="CHEBI:456215"/>
        <dbReference type="EC" id="2.7.6.1"/>
    </reaction>
</comment>
<comment type="cofactor">
    <cofactor evidence="1">
        <name>Mg(2+)</name>
        <dbReference type="ChEBI" id="CHEBI:18420"/>
    </cofactor>
    <text evidence="1">Binds 2 Mg(2+) ions per subunit.</text>
</comment>
<comment type="pathway">
    <text evidence="1">Metabolic intermediate biosynthesis; 5-phospho-alpha-D-ribose 1-diphosphate biosynthesis; 5-phospho-alpha-D-ribose 1-diphosphate from D-ribose 5-phosphate (route I): step 1/1.</text>
</comment>
<comment type="subcellular location">
    <subcellularLocation>
        <location evidence="1">Cytoplasm</location>
    </subcellularLocation>
</comment>
<comment type="similarity">
    <text evidence="1">Belongs to the ribose-phosphate pyrophosphokinase family. Class III (archaeal) subfamily.</text>
</comment>
<name>KPRS_SULAC</name>
<proteinExistence type="inferred from homology"/>
<sequence>MIIIGGTATNWIDERLSKLLVSRLVKIEHKVFPDGESYIRIPERLMGEDVLVVQSLYPPQDKHLVELFFILETLNDMKANKITVIIPYLAYSRQNRRFKEGEAVSTKTVLNLIKKTGATSLMVVEPHHYEELQYFDGEVKIADPIPDIARVINGKVTNPFVLAPDKGALNRAKRLSQELGCDYSYLEKQRDLTTGEVRVTNLPDLRLDGKEVILVDDIISTGGTMVQASQIAYSKGAKKVIATAVHSLFVENAYDRLINAGIKEIITTNTIPQDTSKVTIVDVSESIARKI</sequence>
<keyword id="KW-0067">ATP-binding</keyword>
<keyword id="KW-0963">Cytoplasm</keyword>
<keyword id="KW-0418">Kinase</keyword>
<keyword id="KW-0460">Magnesium</keyword>
<keyword id="KW-0479">Metal-binding</keyword>
<keyword id="KW-0545">Nucleotide biosynthesis</keyword>
<keyword id="KW-0547">Nucleotide-binding</keyword>
<keyword id="KW-1185">Reference proteome</keyword>
<keyword id="KW-0808">Transferase</keyword>
<protein>
    <recommendedName>
        <fullName evidence="1">Ribose-phosphate pyrophosphokinase</fullName>
        <shortName evidence="1">RPPK</shortName>
        <ecNumber evidence="1">2.7.6.1</ecNumber>
    </recommendedName>
    <alternativeName>
        <fullName evidence="1">5-phospho-D-ribosyl alpha-1-diphosphate synthase</fullName>
    </alternativeName>
    <alternativeName>
        <fullName evidence="1">Phosphoribosyl diphosphate synthase</fullName>
    </alternativeName>
    <alternativeName>
        <fullName evidence="1">Phosphoribosyl pyrophosphate synthase</fullName>
        <shortName evidence="1">P-Rib-PP synthase</shortName>
        <shortName evidence="1">PRPP synthase</shortName>
        <shortName evidence="1">PRPPase</shortName>
    </alternativeName>
</protein>
<feature type="chain" id="PRO_0000141247" description="Ribose-phosphate pyrophosphokinase">
    <location>
        <begin position="1"/>
        <end position="291"/>
    </location>
</feature>
<feature type="active site" evidence="1">
    <location>
        <position position="188"/>
    </location>
</feature>
<feature type="binding site" evidence="1">
    <location>
        <begin position="34"/>
        <end position="36"/>
    </location>
    <ligand>
        <name>ATP</name>
        <dbReference type="ChEBI" id="CHEBI:30616"/>
    </ligand>
</feature>
<feature type="binding site" evidence="1">
    <location>
        <begin position="93"/>
        <end position="94"/>
    </location>
    <ligand>
        <name>ATP</name>
        <dbReference type="ChEBI" id="CHEBI:30616"/>
    </ligand>
</feature>
<feature type="binding site" evidence="1">
    <location>
        <position position="127"/>
    </location>
    <ligand>
        <name>Mg(2+)</name>
        <dbReference type="ChEBI" id="CHEBI:18420"/>
        <label>1</label>
    </ligand>
</feature>
<feature type="binding site" evidence="1">
    <location>
        <position position="165"/>
    </location>
    <ligand>
        <name>Mg(2+)</name>
        <dbReference type="ChEBI" id="CHEBI:18420"/>
        <label>2</label>
    </ligand>
</feature>
<feature type="binding site" evidence="1">
    <location>
        <position position="190"/>
    </location>
    <ligand>
        <name>D-ribose 5-phosphate</name>
        <dbReference type="ChEBI" id="CHEBI:78346"/>
    </ligand>
</feature>
<feature type="binding site" evidence="1">
    <location>
        <position position="216"/>
    </location>
    <ligand>
        <name>D-ribose 5-phosphate</name>
        <dbReference type="ChEBI" id="CHEBI:78346"/>
    </ligand>
</feature>
<feature type="binding site" evidence="1">
    <location>
        <begin position="220"/>
        <end position="224"/>
    </location>
    <ligand>
        <name>D-ribose 5-phosphate</name>
        <dbReference type="ChEBI" id="CHEBI:78346"/>
    </ligand>
</feature>
<gene>
    <name evidence="1" type="primary">prs</name>
    <name type="ordered locus">Saci_1282</name>
</gene>
<accession>Q4J9A6</accession>